<organism>
    <name type="scientific">Human cytomegalovirus (strain Merlin)</name>
    <name type="common">HHV-5</name>
    <name type="synonym">Human herpesvirus 5</name>
    <dbReference type="NCBI Taxonomy" id="295027"/>
    <lineage>
        <taxon>Viruses</taxon>
        <taxon>Duplodnaviria</taxon>
        <taxon>Heunggongvirae</taxon>
        <taxon>Peploviricota</taxon>
        <taxon>Herviviricetes</taxon>
        <taxon>Herpesvirales</taxon>
        <taxon>Orthoherpesviridae</taxon>
        <taxon>Betaherpesvirinae</taxon>
        <taxon>Cytomegalovirus</taxon>
        <taxon>Cytomegalovirus humanbeta5</taxon>
        <taxon>Human cytomegalovirus</taxon>
    </lineage>
</organism>
<keyword id="KW-1015">Disulfide bond</keyword>
<keyword id="KW-1185">Reference proteome</keyword>
<evidence type="ECO:0000250" key="1"/>
<evidence type="ECO:0000305" key="2"/>
<accession>F5HA06</accession>
<protein>
    <recommendedName>
        <fullName>Putative viral CXC chemokine 2</fullName>
        <shortName>vCXCL2</shortName>
    </recommendedName>
</protein>
<dbReference type="EMBL" id="AY446894">
    <property type="protein sequence ID" value="AAR31674.1"/>
    <property type="molecule type" value="Genomic_DNA"/>
</dbReference>
<dbReference type="RefSeq" id="YP_081570.1">
    <property type="nucleotide sequence ID" value="NC_006273.2"/>
</dbReference>
<dbReference type="SMR" id="F5HA06"/>
<dbReference type="DNASU" id="3077419"/>
<dbReference type="GeneID" id="3077419"/>
<dbReference type="KEGG" id="vg:3077419"/>
<dbReference type="Reactome" id="R-HSA-9610379">
    <property type="pathway name" value="HCMV Late Events"/>
</dbReference>
<dbReference type="Proteomes" id="UP000000938">
    <property type="component" value="Segment"/>
</dbReference>
<dbReference type="GO" id="GO:0005576">
    <property type="term" value="C:extracellular region"/>
    <property type="evidence" value="ECO:0007669"/>
    <property type="project" value="InterPro"/>
</dbReference>
<dbReference type="GO" id="GO:0008009">
    <property type="term" value="F:chemokine activity"/>
    <property type="evidence" value="ECO:0007669"/>
    <property type="project" value="InterPro"/>
</dbReference>
<dbReference type="GO" id="GO:0006952">
    <property type="term" value="P:defense response"/>
    <property type="evidence" value="ECO:0007669"/>
    <property type="project" value="InterPro"/>
</dbReference>
<dbReference type="GO" id="GO:0006955">
    <property type="term" value="P:immune response"/>
    <property type="evidence" value="ECO:0007669"/>
    <property type="project" value="InterPro"/>
</dbReference>
<dbReference type="CDD" id="cd00273">
    <property type="entry name" value="Chemokine_CXC"/>
    <property type="match status" value="1"/>
</dbReference>
<dbReference type="Gene3D" id="2.40.50.40">
    <property type="match status" value="1"/>
</dbReference>
<dbReference type="InterPro" id="IPR001811">
    <property type="entry name" value="Chemokine_IL8-like_dom"/>
</dbReference>
<dbReference type="InterPro" id="IPR033899">
    <property type="entry name" value="CXC_Chemokine_domain"/>
</dbReference>
<dbReference type="InterPro" id="IPR036048">
    <property type="entry name" value="Interleukin_8-like_sf"/>
</dbReference>
<dbReference type="Pfam" id="PF00048">
    <property type="entry name" value="IL8"/>
    <property type="match status" value="1"/>
</dbReference>
<dbReference type="SMART" id="SM00199">
    <property type="entry name" value="SCY"/>
    <property type="match status" value="1"/>
</dbReference>
<dbReference type="SUPFAM" id="SSF54117">
    <property type="entry name" value="Interleukin 8-like chemokines"/>
    <property type="match status" value="1"/>
</dbReference>
<feature type="chain" id="PRO_0000416443" description="Putative viral CXC chemokine 2">
    <location>
        <begin position="1"/>
        <end position="159"/>
    </location>
</feature>
<feature type="disulfide bond" evidence="1">
    <location>
        <begin position="50"/>
        <end position="77"/>
    </location>
</feature>
<feature type="disulfide bond" evidence="1">
    <location>
        <begin position="52"/>
        <end position="93"/>
    </location>
</feature>
<proteinExistence type="inferred from homology"/>
<sequence length="159" mass="18718">MLLTWLHHPILNSRIKLLSVRYLSLTAYMLLAICPIAVRLLELEDYDKRCRCNNQILLNTLPVGTELLKPIAASESCNRQEVLAILKDKGTKCLNPNAQAVRRHINRLFFRLVLDEEQRIYDVVSTNIEFGAWPVPTAYKAFLWKYAKKLNYHYFRLRW</sequence>
<name>UL147_HCMVM</name>
<gene>
    <name type="primary">UL147</name>
</gene>
<organismHost>
    <name type="scientific">Homo sapiens</name>
    <name type="common">Human</name>
    <dbReference type="NCBI Taxonomy" id="9606"/>
</organismHost>
<reference key="1">
    <citation type="journal article" date="2004" name="J. Gen. Virol.">
        <title>Genetic content of wild-type human cytomegalovirus.</title>
        <authorList>
            <person name="Dolan A."/>
            <person name="Cunningham C."/>
            <person name="Hector R.D."/>
            <person name="Hassan-Walker A.F."/>
            <person name="Lee L."/>
            <person name="Addison C."/>
            <person name="Dargan D.J."/>
            <person name="McGeoch D.J."/>
            <person name="Gatherer D."/>
            <person name="Emery V.C."/>
            <person name="Griffiths P.D."/>
            <person name="Sinzger C."/>
            <person name="McSharry B.P."/>
            <person name="Wilkinson G.W.G."/>
            <person name="Davison A.J."/>
        </authorList>
    </citation>
    <scope>NUCLEOTIDE SEQUENCE [LARGE SCALE GENOMIC DNA]</scope>
</reference>
<comment type="similarity">
    <text evidence="2">Belongs to the intercrine alpha (chemokine CxC) family.</text>
</comment>